<proteinExistence type="inferred from homology"/>
<evidence type="ECO:0000255" key="1">
    <source>
        <dbReference type="HAMAP-Rule" id="MF_00144"/>
    </source>
</evidence>
<reference key="1">
    <citation type="journal article" date="2007" name="PLoS ONE">
        <title>Paradoxical DNA repair and peroxide resistance gene conservation in Bacillus pumilus SAFR-032.</title>
        <authorList>
            <person name="Gioia J."/>
            <person name="Yerrapragada S."/>
            <person name="Qin X."/>
            <person name="Jiang H."/>
            <person name="Igboeli O.C."/>
            <person name="Muzny D."/>
            <person name="Dugan-Rocha S."/>
            <person name="Ding Y."/>
            <person name="Hawes A."/>
            <person name="Liu W."/>
            <person name="Perez L."/>
            <person name="Kovar C."/>
            <person name="Dinh H."/>
            <person name="Lee S."/>
            <person name="Nazareth L."/>
            <person name="Blyth P."/>
            <person name="Holder M."/>
            <person name="Buhay C."/>
            <person name="Tirumalai M.R."/>
            <person name="Liu Y."/>
            <person name="Dasgupta I."/>
            <person name="Bokhetache L."/>
            <person name="Fujita M."/>
            <person name="Karouia F."/>
            <person name="Eswara Moorthy P."/>
            <person name="Siefert J."/>
            <person name="Uzman A."/>
            <person name="Buzumbo P."/>
            <person name="Verma A."/>
            <person name="Zwiya H."/>
            <person name="McWilliams B.D."/>
            <person name="Olowu A."/>
            <person name="Clinkenbeard K.D."/>
            <person name="Newcombe D."/>
            <person name="Golebiewski L."/>
            <person name="Petrosino J.F."/>
            <person name="Nicholson W.L."/>
            <person name="Fox G.E."/>
            <person name="Venkateswaran K."/>
            <person name="Highlander S.K."/>
            <person name="Weinstock G.M."/>
        </authorList>
    </citation>
    <scope>NUCLEOTIDE SEQUENCE [LARGE SCALE GENOMIC DNA]</scope>
    <source>
        <strain>SAFR-032</strain>
    </source>
</reference>
<name>MNMA_BACP2</name>
<comment type="function">
    <text evidence="1">Catalyzes the 2-thiolation of uridine at the wobble position (U34) of tRNA, leading to the formation of s(2)U34.</text>
</comment>
<comment type="catalytic activity">
    <reaction evidence="1">
        <text>S-sulfanyl-L-cysteinyl-[protein] + uridine(34) in tRNA + AH2 + ATP = 2-thiouridine(34) in tRNA + L-cysteinyl-[protein] + A + AMP + diphosphate + H(+)</text>
        <dbReference type="Rhea" id="RHEA:47032"/>
        <dbReference type="Rhea" id="RHEA-COMP:10131"/>
        <dbReference type="Rhea" id="RHEA-COMP:11726"/>
        <dbReference type="Rhea" id="RHEA-COMP:11727"/>
        <dbReference type="Rhea" id="RHEA-COMP:11728"/>
        <dbReference type="ChEBI" id="CHEBI:13193"/>
        <dbReference type="ChEBI" id="CHEBI:15378"/>
        <dbReference type="ChEBI" id="CHEBI:17499"/>
        <dbReference type="ChEBI" id="CHEBI:29950"/>
        <dbReference type="ChEBI" id="CHEBI:30616"/>
        <dbReference type="ChEBI" id="CHEBI:33019"/>
        <dbReference type="ChEBI" id="CHEBI:61963"/>
        <dbReference type="ChEBI" id="CHEBI:65315"/>
        <dbReference type="ChEBI" id="CHEBI:87170"/>
        <dbReference type="ChEBI" id="CHEBI:456215"/>
        <dbReference type="EC" id="2.8.1.13"/>
    </reaction>
</comment>
<comment type="subcellular location">
    <subcellularLocation>
        <location evidence="1">Cytoplasm</location>
    </subcellularLocation>
</comment>
<comment type="similarity">
    <text evidence="1">Belongs to the MnmA/TRMU family.</text>
</comment>
<keyword id="KW-0067">ATP-binding</keyword>
<keyword id="KW-0963">Cytoplasm</keyword>
<keyword id="KW-1015">Disulfide bond</keyword>
<keyword id="KW-0547">Nucleotide-binding</keyword>
<keyword id="KW-0694">RNA-binding</keyword>
<keyword id="KW-0808">Transferase</keyword>
<keyword id="KW-0819">tRNA processing</keyword>
<keyword id="KW-0820">tRNA-binding</keyword>
<accession>A8FFP0</accession>
<dbReference type="EC" id="2.8.1.13" evidence="1"/>
<dbReference type="EMBL" id="CP000813">
    <property type="protein sequence ID" value="ABV63057.1"/>
    <property type="molecule type" value="Genomic_DNA"/>
</dbReference>
<dbReference type="RefSeq" id="WP_003216305.1">
    <property type="nucleotide sequence ID" value="NZ_VEIS01000010.1"/>
</dbReference>
<dbReference type="SMR" id="A8FFP0"/>
<dbReference type="STRING" id="315750.BPUM_2391"/>
<dbReference type="GeneID" id="5621654"/>
<dbReference type="KEGG" id="bpu:BPUM_2391"/>
<dbReference type="eggNOG" id="COG0482">
    <property type="taxonomic scope" value="Bacteria"/>
</dbReference>
<dbReference type="HOGENOM" id="CLU_035188_1_0_9"/>
<dbReference type="OrthoDB" id="9800696at2"/>
<dbReference type="Proteomes" id="UP000001355">
    <property type="component" value="Chromosome"/>
</dbReference>
<dbReference type="GO" id="GO:0005737">
    <property type="term" value="C:cytoplasm"/>
    <property type="evidence" value="ECO:0007669"/>
    <property type="project" value="UniProtKB-SubCell"/>
</dbReference>
<dbReference type="GO" id="GO:0005524">
    <property type="term" value="F:ATP binding"/>
    <property type="evidence" value="ECO:0007669"/>
    <property type="project" value="UniProtKB-KW"/>
</dbReference>
<dbReference type="GO" id="GO:0000049">
    <property type="term" value="F:tRNA binding"/>
    <property type="evidence" value="ECO:0007669"/>
    <property type="project" value="UniProtKB-KW"/>
</dbReference>
<dbReference type="GO" id="GO:0103016">
    <property type="term" value="F:tRNA-uridine 2-sulfurtransferase activity"/>
    <property type="evidence" value="ECO:0007669"/>
    <property type="project" value="UniProtKB-EC"/>
</dbReference>
<dbReference type="GO" id="GO:0002143">
    <property type="term" value="P:tRNA wobble position uridine thiolation"/>
    <property type="evidence" value="ECO:0007669"/>
    <property type="project" value="TreeGrafter"/>
</dbReference>
<dbReference type="CDD" id="cd01998">
    <property type="entry name" value="MnmA_TRMU-like"/>
    <property type="match status" value="1"/>
</dbReference>
<dbReference type="FunFam" id="2.30.30.280:FF:000001">
    <property type="entry name" value="tRNA-specific 2-thiouridylase MnmA"/>
    <property type="match status" value="1"/>
</dbReference>
<dbReference type="FunFam" id="2.40.30.10:FF:000023">
    <property type="entry name" value="tRNA-specific 2-thiouridylase MnmA"/>
    <property type="match status" value="1"/>
</dbReference>
<dbReference type="FunFam" id="3.40.50.620:FF:000004">
    <property type="entry name" value="tRNA-specific 2-thiouridylase MnmA"/>
    <property type="match status" value="1"/>
</dbReference>
<dbReference type="Gene3D" id="2.30.30.280">
    <property type="entry name" value="Adenine nucleotide alpha hydrolases-like domains"/>
    <property type="match status" value="1"/>
</dbReference>
<dbReference type="Gene3D" id="3.40.50.620">
    <property type="entry name" value="HUPs"/>
    <property type="match status" value="1"/>
</dbReference>
<dbReference type="Gene3D" id="2.40.30.10">
    <property type="entry name" value="Translation factors"/>
    <property type="match status" value="1"/>
</dbReference>
<dbReference type="HAMAP" id="MF_00144">
    <property type="entry name" value="tRNA_thiouridyl_MnmA"/>
    <property type="match status" value="1"/>
</dbReference>
<dbReference type="InterPro" id="IPR004506">
    <property type="entry name" value="MnmA-like"/>
</dbReference>
<dbReference type="InterPro" id="IPR046885">
    <property type="entry name" value="MnmA-like_C"/>
</dbReference>
<dbReference type="InterPro" id="IPR046884">
    <property type="entry name" value="MnmA-like_central"/>
</dbReference>
<dbReference type="InterPro" id="IPR023382">
    <property type="entry name" value="MnmA-like_central_sf"/>
</dbReference>
<dbReference type="InterPro" id="IPR014729">
    <property type="entry name" value="Rossmann-like_a/b/a_fold"/>
</dbReference>
<dbReference type="NCBIfam" id="NF001138">
    <property type="entry name" value="PRK00143.1"/>
    <property type="match status" value="1"/>
</dbReference>
<dbReference type="NCBIfam" id="TIGR00420">
    <property type="entry name" value="trmU"/>
    <property type="match status" value="1"/>
</dbReference>
<dbReference type="PANTHER" id="PTHR11933:SF5">
    <property type="entry name" value="MITOCHONDRIAL TRNA-SPECIFIC 2-THIOURIDYLASE 1"/>
    <property type="match status" value="1"/>
</dbReference>
<dbReference type="PANTHER" id="PTHR11933">
    <property type="entry name" value="TRNA 5-METHYLAMINOMETHYL-2-THIOURIDYLATE -METHYLTRANSFERASE"/>
    <property type="match status" value="1"/>
</dbReference>
<dbReference type="Pfam" id="PF03054">
    <property type="entry name" value="tRNA_Me_trans"/>
    <property type="match status" value="1"/>
</dbReference>
<dbReference type="Pfam" id="PF20258">
    <property type="entry name" value="tRNA_Me_trans_C"/>
    <property type="match status" value="1"/>
</dbReference>
<dbReference type="Pfam" id="PF20259">
    <property type="entry name" value="tRNA_Me_trans_M"/>
    <property type="match status" value="1"/>
</dbReference>
<dbReference type="SUPFAM" id="SSF52402">
    <property type="entry name" value="Adenine nucleotide alpha hydrolases-like"/>
    <property type="match status" value="1"/>
</dbReference>
<sequence length="372" mass="41891">MTKRPEDTRVVVGMSGGVDSSVAALMLKEQGYDVIGIFMKNWDDTDENGVCTATEDYEDVIRVCNQIGIPYYAVNFEKQYWDKVFQYFLDEYKAGRTPNPDVMCNKEIKFKAFLEHALSLGADYLATGHYARVDRTGDEVKMLRGLDANKDQTYFLNQLTQEQLDKVMFPIGDLEKKRVRELAKEAELATATKKDSTGICFIGERNFKTFLSQYLPAQPGVMQTMDGEVKGEHDGLMYYTIGQRQGLGIGGSGDPWFVVGKDLEQNILFVEQGFHNPLLYSESISAVNISWTRPHIVGENGELTCTAKFRYRQEDHHVKVKMTGEQEAMVIFDEPVRAVTPGQAVVFYDGDECLGGGTIDDVFKDGQKLSYV</sequence>
<protein>
    <recommendedName>
        <fullName evidence="1">tRNA-specific 2-thiouridylase MnmA</fullName>
        <ecNumber evidence="1">2.8.1.13</ecNumber>
    </recommendedName>
</protein>
<organism>
    <name type="scientific">Bacillus pumilus (strain SAFR-032)</name>
    <dbReference type="NCBI Taxonomy" id="315750"/>
    <lineage>
        <taxon>Bacteria</taxon>
        <taxon>Bacillati</taxon>
        <taxon>Bacillota</taxon>
        <taxon>Bacilli</taxon>
        <taxon>Bacillales</taxon>
        <taxon>Bacillaceae</taxon>
        <taxon>Bacillus</taxon>
    </lineage>
</organism>
<feature type="chain" id="PRO_1000057943" description="tRNA-specific 2-thiouridylase MnmA">
    <location>
        <begin position="1"/>
        <end position="372"/>
    </location>
</feature>
<feature type="region of interest" description="Interaction with target base in tRNA" evidence="1">
    <location>
        <begin position="99"/>
        <end position="101"/>
    </location>
</feature>
<feature type="region of interest" description="Interaction with tRNA" evidence="1">
    <location>
        <begin position="150"/>
        <end position="152"/>
    </location>
</feature>
<feature type="region of interest" description="Interaction with tRNA" evidence="1">
    <location>
        <begin position="310"/>
        <end position="311"/>
    </location>
</feature>
<feature type="active site" description="Nucleophile" evidence="1">
    <location>
        <position position="104"/>
    </location>
</feature>
<feature type="active site" description="Cysteine persulfide intermediate" evidence="1">
    <location>
        <position position="200"/>
    </location>
</feature>
<feature type="binding site" evidence="1">
    <location>
        <begin position="13"/>
        <end position="20"/>
    </location>
    <ligand>
        <name>ATP</name>
        <dbReference type="ChEBI" id="CHEBI:30616"/>
    </ligand>
</feature>
<feature type="binding site" evidence="1">
    <location>
        <position position="39"/>
    </location>
    <ligand>
        <name>ATP</name>
        <dbReference type="ChEBI" id="CHEBI:30616"/>
    </ligand>
</feature>
<feature type="binding site" evidence="1">
    <location>
        <position position="128"/>
    </location>
    <ligand>
        <name>ATP</name>
        <dbReference type="ChEBI" id="CHEBI:30616"/>
    </ligand>
</feature>
<feature type="site" description="Interaction with tRNA" evidence="1">
    <location>
        <position position="129"/>
    </location>
</feature>
<feature type="site" description="Interaction with tRNA" evidence="1">
    <location>
        <position position="343"/>
    </location>
</feature>
<feature type="disulfide bond" description="Alternate" evidence="1">
    <location>
        <begin position="104"/>
        <end position="200"/>
    </location>
</feature>
<gene>
    <name evidence="1" type="primary">mnmA</name>
    <name type="synonym">trmU</name>
    <name type="ordered locus">BPUM_2391</name>
</gene>